<gene>
    <name evidence="1" type="primary">rpoB</name>
    <name type="ordered locus">BH0126</name>
</gene>
<proteinExistence type="inferred from homology"/>
<keyword id="KW-0240">DNA-directed RNA polymerase</keyword>
<keyword id="KW-0548">Nucleotidyltransferase</keyword>
<keyword id="KW-1185">Reference proteome</keyword>
<keyword id="KW-0804">Transcription</keyword>
<keyword id="KW-0808">Transferase</keyword>
<protein>
    <recommendedName>
        <fullName evidence="1">DNA-directed RNA polymerase subunit beta</fullName>
        <shortName evidence="1">RNAP subunit beta</shortName>
        <ecNumber evidence="1">2.7.7.6</ecNumber>
    </recommendedName>
    <alternativeName>
        <fullName evidence="1">RNA polymerase subunit beta</fullName>
    </alternativeName>
    <alternativeName>
        <fullName evidence="1">Transcriptase subunit beta</fullName>
    </alternativeName>
</protein>
<sequence>MTGQLIQYGRHRQRRSYARINEVLELPNLIEIQTASYQWFLDEGLREMFQDISPIQDFTGNLVLEFIDYSLGEPKYPVDESKERDVTYAAPLRVKVRLINKETGEVKEQEVFMGDFPLMTDTGTFIINGAERVIVSQLVRSPSVYYSEKIDKNGKKGYTATVIPNRGAWLELETDAKDIVYVRIDRTRKIPVTVLLRALGFGSDQEIIDLLGEDEYLRNTLEKDNTDSAEKALLEIYERLRPGEPPTVENAKSLLDSRFFDPKRYDLANVGRYKVNKKLHIKNRLFNQRLAETLIDPETGEVIAEEGSIIDRRTLDRILPYLENNVGFRTVRMSGGVVEEDEVRLQSVKIYAPDDQDGEHVIRVIGNGLVEKEIKHITPADIIASINYFFNLLHSVGGTDDIDHLGNRRLRSVGELLQNQFRIGLSRMERVVRERMSIQDPNSITPQALINIRPVIASIKEFFGSSQLSQFMDQTNPLAELTHKRRLSALGPGGLTRERAGFEVRDVHYSHYGRMCPIETPEGPNIGLINSLSTYAKVNEFGFMETPYRRVDPETGKVTAQIDYLTADEEDNYVVAQANMKLAEDGSFIDENIIARFRGENIVVSRDRVDYMDVSPKQVVSAATSCIPFLENDDSNRALMGANMQRQAVPLLVPEAPIVGTGMEHVSAKDSGAAIVSKHRGIVERVTAKEIWVRRLEEVDGKEIKGDLDKYRLQKFIRSNQGTSYNQRPIVKEGDVVEKREILADGPSMEKGEMALGRNVLVGFMTWEGYNYEDAIILSERLVKDDVYTSIHIEEYESEARDTKLGPEEITRDIPNVGEDALRNLDERGIIRVGAEVKDGDILVGKVTPKGVTELTAEERLLHAIFGEKAREVRDTSLRAPHGGDGIVLDVKIFNREDGDELPPGVNQLVRVYIVQKRKIHEGDKMAGRHGNKGVISRILPEEDMPYLPDGTPIDIMLNPLGVPSRMNIGQVLELHLGMAARRLGLHVASPVFDGASEEDVWATLEEAGMARDGKTILYDGRTGEPFDNRVSVGIMYMIKLAHMVDDKLHARSTGPYSLVTQQPLGGKAQFGGQRFGEMEVWALEAYGAAYTLQEILTVKSDDVVGRVKTYEAIVKGENVPEPGVPESFKVLIKELQSLGMDVKMLSSTEEEIEMKELDDEDEQASDKLNLNIDSTESNV</sequence>
<organism>
    <name type="scientific">Halalkalibacterium halodurans (strain ATCC BAA-125 / DSM 18197 / FERM 7344 / JCM 9153 / C-125)</name>
    <name type="common">Bacillus halodurans</name>
    <dbReference type="NCBI Taxonomy" id="272558"/>
    <lineage>
        <taxon>Bacteria</taxon>
        <taxon>Bacillati</taxon>
        <taxon>Bacillota</taxon>
        <taxon>Bacilli</taxon>
        <taxon>Bacillales</taxon>
        <taxon>Bacillaceae</taxon>
        <taxon>Halalkalibacterium (ex Joshi et al. 2022)</taxon>
    </lineage>
</organism>
<accession>Q9Z9M2</accession>
<comment type="function">
    <text evidence="1">DNA-dependent RNA polymerase catalyzes the transcription of DNA into RNA using the four ribonucleoside triphosphates as substrates.</text>
</comment>
<comment type="catalytic activity">
    <reaction evidence="1">
        <text>RNA(n) + a ribonucleoside 5'-triphosphate = RNA(n+1) + diphosphate</text>
        <dbReference type="Rhea" id="RHEA:21248"/>
        <dbReference type="Rhea" id="RHEA-COMP:14527"/>
        <dbReference type="Rhea" id="RHEA-COMP:17342"/>
        <dbReference type="ChEBI" id="CHEBI:33019"/>
        <dbReference type="ChEBI" id="CHEBI:61557"/>
        <dbReference type="ChEBI" id="CHEBI:140395"/>
        <dbReference type="EC" id="2.7.7.6"/>
    </reaction>
</comment>
<comment type="subunit">
    <text evidence="1">The RNAP catalytic core consists of 2 alpha, 1 beta, 1 beta' and 1 omega subunit. When a sigma factor is associated with the core the holoenzyme is formed, which can initiate transcription.</text>
</comment>
<comment type="similarity">
    <text evidence="1">Belongs to the RNA polymerase beta chain family.</text>
</comment>
<dbReference type="EC" id="2.7.7.6" evidence="1"/>
<dbReference type="EMBL" id="AB017508">
    <property type="protein sequence ID" value="BAA75263.1"/>
    <property type="molecule type" value="Genomic_DNA"/>
</dbReference>
<dbReference type="EMBL" id="BA000004">
    <property type="protein sequence ID" value="BAB03845.1"/>
    <property type="molecule type" value="Genomic_DNA"/>
</dbReference>
<dbReference type="PIR" id="T44375">
    <property type="entry name" value="T44375"/>
</dbReference>
<dbReference type="RefSeq" id="WP_010896309.1">
    <property type="nucleotide sequence ID" value="NC_002570.2"/>
</dbReference>
<dbReference type="SMR" id="Q9Z9M2"/>
<dbReference type="STRING" id="272558.gene:10725966"/>
<dbReference type="KEGG" id="bha:BH0126"/>
<dbReference type="eggNOG" id="COG0085">
    <property type="taxonomic scope" value="Bacteria"/>
</dbReference>
<dbReference type="HOGENOM" id="CLU_000524_4_1_9"/>
<dbReference type="OrthoDB" id="9803954at2"/>
<dbReference type="Proteomes" id="UP000001258">
    <property type="component" value="Chromosome"/>
</dbReference>
<dbReference type="GO" id="GO:0000428">
    <property type="term" value="C:DNA-directed RNA polymerase complex"/>
    <property type="evidence" value="ECO:0007669"/>
    <property type="project" value="UniProtKB-KW"/>
</dbReference>
<dbReference type="GO" id="GO:0003677">
    <property type="term" value="F:DNA binding"/>
    <property type="evidence" value="ECO:0007669"/>
    <property type="project" value="UniProtKB-UniRule"/>
</dbReference>
<dbReference type="GO" id="GO:0003899">
    <property type="term" value="F:DNA-directed RNA polymerase activity"/>
    <property type="evidence" value="ECO:0007669"/>
    <property type="project" value="UniProtKB-UniRule"/>
</dbReference>
<dbReference type="GO" id="GO:0032549">
    <property type="term" value="F:ribonucleoside binding"/>
    <property type="evidence" value="ECO:0007669"/>
    <property type="project" value="InterPro"/>
</dbReference>
<dbReference type="GO" id="GO:0006351">
    <property type="term" value="P:DNA-templated transcription"/>
    <property type="evidence" value="ECO:0007669"/>
    <property type="project" value="UniProtKB-UniRule"/>
</dbReference>
<dbReference type="CDD" id="cd00653">
    <property type="entry name" value="RNA_pol_B_RPB2"/>
    <property type="match status" value="1"/>
</dbReference>
<dbReference type="FunFam" id="3.90.1800.10:FF:000001">
    <property type="entry name" value="DNA-directed RNA polymerase subunit beta"/>
    <property type="match status" value="1"/>
</dbReference>
<dbReference type="Gene3D" id="2.40.50.100">
    <property type="match status" value="1"/>
</dbReference>
<dbReference type="Gene3D" id="2.40.50.150">
    <property type="match status" value="1"/>
</dbReference>
<dbReference type="Gene3D" id="3.90.1100.10">
    <property type="match status" value="3"/>
</dbReference>
<dbReference type="Gene3D" id="2.40.270.10">
    <property type="entry name" value="DNA-directed RNA polymerase, subunit 2, domain 6"/>
    <property type="match status" value="1"/>
</dbReference>
<dbReference type="Gene3D" id="3.90.1800.10">
    <property type="entry name" value="RNA polymerase alpha subunit dimerisation domain"/>
    <property type="match status" value="1"/>
</dbReference>
<dbReference type="Gene3D" id="3.90.1110.10">
    <property type="entry name" value="RNA polymerase Rpb2, domain 2"/>
    <property type="match status" value="1"/>
</dbReference>
<dbReference type="HAMAP" id="MF_01321">
    <property type="entry name" value="RNApol_bact_RpoB"/>
    <property type="match status" value="1"/>
</dbReference>
<dbReference type="InterPro" id="IPR019462">
    <property type="entry name" value="DNA-dir_RNA_pol_bsu_external_1"/>
</dbReference>
<dbReference type="InterPro" id="IPR015712">
    <property type="entry name" value="DNA-dir_RNA_pol_su2"/>
</dbReference>
<dbReference type="InterPro" id="IPR007120">
    <property type="entry name" value="DNA-dir_RNAP_su2_dom"/>
</dbReference>
<dbReference type="InterPro" id="IPR037033">
    <property type="entry name" value="DNA-dir_RNAP_su2_hyb_sf"/>
</dbReference>
<dbReference type="InterPro" id="IPR010243">
    <property type="entry name" value="RNA_pol_bsu_bac"/>
</dbReference>
<dbReference type="InterPro" id="IPR007121">
    <property type="entry name" value="RNA_pol_bsu_CS"/>
</dbReference>
<dbReference type="InterPro" id="IPR007644">
    <property type="entry name" value="RNA_pol_bsu_protrusion"/>
</dbReference>
<dbReference type="InterPro" id="IPR007642">
    <property type="entry name" value="RNA_pol_Rpb2_2"/>
</dbReference>
<dbReference type="InterPro" id="IPR037034">
    <property type="entry name" value="RNA_pol_Rpb2_2_sf"/>
</dbReference>
<dbReference type="InterPro" id="IPR007645">
    <property type="entry name" value="RNA_pol_Rpb2_3"/>
</dbReference>
<dbReference type="InterPro" id="IPR007641">
    <property type="entry name" value="RNA_pol_Rpb2_7"/>
</dbReference>
<dbReference type="InterPro" id="IPR014724">
    <property type="entry name" value="RNA_pol_RPB2_OB-fold"/>
</dbReference>
<dbReference type="NCBIfam" id="NF001616">
    <property type="entry name" value="PRK00405.1"/>
    <property type="match status" value="1"/>
</dbReference>
<dbReference type="NCBIfam" id="TIGR02013">
    <property type="entry name" value="rpoB"/>
    <property type="match status" value="1"/>
</dbReference>
<dbReference type="PANTHER" id="PTHR20856">
    <property type="entry name" value="DNA-DIRECTED RNA POLYMERASE I SUBUNIT 2"/>
    <property type="match status" value="1"/>
</dbReference>
<dbReference type="Pfam" id="PF04563">
    <property type="entry name" value="RNA_pol_Rpb2_1"/>
    <property type="match status" value="1"/>
</dbReference>
<dbReference type="Pfam" id="PF04561">
    <property type="entry name" value="RNA_pol_Rpb2_2"/>
    <property type="match status" value="2"/>
</dbReference>
<dbReference type="Pfam" id="PF04565">
    <property type="entry name" value="RNA_pol_Rpb2_3"/>
    <property type="match status" value="1"/>
</dbReference>
<dbReference type="Pfam" id="PF10385">
    <property type="entry name" value="RNA_pol_Rpb2_45"/>
    <property type="match status" value="1"/>
</dbReference>
<dbReference type="Pfam" id="PF00562">
    <property type="entry name" value="RNA_pol_Rpb2_6"/>
    <property type="match status" value="1"/>
</dbReference>
<dbReference type="Pfam" id="PF04560">
    <property type="entry name" value="RNA_pol_Rpb2_7"/>
    <property type="match status" value="1"/>
</dbReference>
<dbReference type="SUPFAM" id="SSF64484">
    <property type="entry name" value="beta and beta-prime subunits of DNA dependent RNA-polymerase"/>
    <property type="match status" value="1"/>
</dbReference>
<dbReference type="PROSITE" id="PS01166">
    <property type="entry name" value="RNA_POL_BETA"/>
    <property type="match status" value="1"/>
</dbReference>
<name>RPOB_HALH5</name>
<reference key="1">
    <citation type="journal article" date="1999" name="Biosci. Biotechnol. Biochem.">
        <title>Sequence analysis of a 32-kb region including the major ribosomal protein gene clusters from alkaliphilic Bacillus sp. strain C-125.</title>
        <authorList>
            <person name="Takami H."/>
            <person name="Takaki Y."/>
            <person name="Nakasone K."/>
            <person name="Hirama C."/>
            <person name="Inoue A."/>
            <person name="Horikoshi K."/>
        </authorList>
    </citation>
    <scope>NUCLEOTIDE SEQUENCE [GENOMIC DNA]</scope>
    <source>
        <strain>ATCC BAA-125 / DSM 18197 / FERM 7344 / JCM 9153 / C-125</strain>
    </source>
</reference>
<reference key="2">
    <citation type="journal article" date="2000" name="Nucleic Acids Res.">
        <title>Complete genome sequence of the alkaliphilic bacterium Bacillus halodurans and genomic sequence comparison with Bacillus subtilis.</title>
        <authorList>
            <person name="Takami H."/>
            <person name="Nakasone K."/>
            <person name="Takaki Y."/>
            <person name="Maeno G."/>
            <person name="Sasaki R."/>
            <person name="Masui N."/>
            <person name="Fuji F."/>
            <person name="Hirama C."/>
            <person name="Nakamura Y."/>
            <person name="Ogasawara N."/>
            <person name="Kuhara S."/>
            <person name="Horikoshi K."/>
        </authorList>
    </citation>
    <scope>NUCLEOTIDE SEQUENCE [LARGE SCALE GENOMIC DNA]</scope>
    <source>
        <strain>ATCC BAA-125 / DSM 18197 / FERM 7344 / JCM 9153 / C-125</strain>
    </source>
</reference>
<evidence type="ECO:0000255" key="1">
    <source>
        <dbReference type="HAMAP-Rule" id="MF_01321"/>
    </source>
</evidence>
<evidence type="ECO:0000256" key="2">
    <source>
        <dbReference type="SAM" id="MobiDB-lite"/>
    </source>
</evidence>
<feature type="chain" id="PRO_0000047859" description="DNA-directed RNA polymerase subunit beta">
    <location>
        <begin position="1"/>
        <end position="1180"/>
    </location>
</feature>
<feature type="region of interest" description="Disordered" evidence="2">
    <location>
        <begin position="1154"/>
        <end position="1180"/>
    </location>
</feature>
<feature type="compositionally biased region" description="Acidic residues" evidence="2">
    <location>
        <begin position="1154"/>
        <end position="1164"/>
    </location>
</feature>
<feature type="compositionally biased region" description="Polar residues" evidence="2">
    <location>
        <begin position="1167"/>
        <end position="1180"/>
    </location>
</feature>